<organism>
    <name type="scientific">Edwardsiella ictaluri (strain 93-146)</name>
    <dbReference type="NCBI Taxonomy" id="634503"/>
    <lineage>
        <taxon>Bacteria</taxon>
        <taxon>Pseudomonadati</taxon>
        <taxon>Pseudomonadota</taxon>
        <taxon>Gammaproteobacteria</taxon>
        <taxon>Enterobacterales</taxon>
        <taxon>Hafniaceae</taxon>
        <taxon>Edwardsiella</taxon>
    </lineage>
</organism>
<gene>
    <name evidence="1" type="primary">rpmD</name>
    <name type="ordered locus">NT01EI_3576</name>
</gene>
<keyword id="KW-0687">Ribonucleoprotein</keyword>
<keyword id="KW-0689">Ribosomal protein</keyword>
<comment type="subunit">
    <text evidence="1">Part of the 50S ribosomal subunit.</text>
</comment>
<comment type="similarity">
    <text evidence="1">Belongs to the universal ribosomal protein uL30 family.</text>
</comment>
<sequence length="59" mass="6544">MAKTIKITQTRSAIGRLPKHKATLLGLGLRRIGHTVEREDTPAVRGMINAVSYMVKVEE</sequence>
<accession>C5BGK7</accession>
<dbReference type="EMBL" id="CP001600">
    <property type="protein sequence ID" value="ACR70704.1"/>
    <property type="molecule type" value="Genomic_DNA"/>
</dbReference>
<dbReference type="RefSeq" id="WP_005290362.1">
    <property type="nucleotide sequence ID" value="NZ_CP169062.1"/>
</dbReference>
<dbReference type="SMR" id="C5BGK7"/>
<dbReference type="STRING" id="67780.B6E78_09480"/>
<dbReference type="GeneID" id="93122099"/>
<dbReference type="KEGG" id="eic:NT01EI_3576"/>
<dbReference type="HOGENOM" id="CLU_131047_1_4_6"/>
<dbReference type="OrthoDB" id="9812790at2"/>
<dbReference type="Proteomes" id="UP000001485">
    <property type="component" value="Chromosome"/>
</dbReference>
<dbReference type="GO" id="GO:0022625">
    <property type="term" value="C:cytosolic large ribosomal subunit"/>
    <property type="evidence" value="ECO:0007669"/>
    <property type="project" value="TreeGrafter"/>
</dbReference>
<dbReference type="GO" id="GO:0003735">
    <property type="term" value="F:structural constituent of ribosome"/>
    <property type="evidence" value="ECO:0007669"/>
    <property type="project" value="InterPro"/>
</dbReference>
<dbReference type="GO" id="GO:0006412">
    <property type="term" value="P:translation"/>
    <property type="evidence" value="ECO:0007669"/>
    <property type="project" value="UniProtKB-UniRule"/>
</dbReference>
<dbReference type="CDD" id="cd01658">
    <property type="entry name" value="Ribosomal_L30"/>
    <property type="match status" value="1"/>
</dbReference>
<dbReference type="FunFam" id="3.30.1390.20:FF:000001">
    <property type="entry name" value="50S ribosomal protein L30"/>
    <property type="match status" value="1"/>
</dbReference>
<dbReference type="Gene3D" id="3.30.1390.20">
    <property type="entry name" value="Ribosomal protein L30, ferredoxin-like fold domain"/>
    <property type="match status" value="1"/>
</dbReference>
<dbReference type="HAMAP" id="MF_01371_B">
    <property type="entry name" value="Ribosomal_uL30_B"/>
    <property type="match status" value="1"/>
</dbReference>
<dbReference type="InterPro" id="IPR036919">
    <property type="entry name" value="Ribo_uL30_ferredoxin-like_sf"/>
</dbReference>
<dbReference type="InterPro" id="IPR005996">
    <property type="entry name" value="Ribosomal_uL30_bac-type"/>
</dbReference>
<dbReference type="InterPro" id="IPR018038">
    <property type="entry name" value="Ribosomal_uL30_CS"/>
</dbReference>
<dbReference type="InterPro" id="IPR016082">
    <property type="entry name" value="Ribosomal_uL30_ferredoxin-like"/>
</dbReference>
<dbReference type="NCBIfam" id="TIGR01308">
    <property type="entry name" value="rpmD_bact"/>
    <property type="match status" value="1"/>
</dbReference>
<dbReference type="PANTHER" id="PTHR15892:SF2">
    <property type="entry name" value="LARGE RIBOSOMAL SUBUNIT PROTEIN UL30M"/>
    <property type="match status" value="1"/>
</dbReference>
<dbReference type="PANTHER" id="PTHR15892">
    <property type="entry name" value="MITOCHONDRIAL RIBOSOMAL PROTEIN L30"/>
    <property type="match status" value="1"/>
</dbReference>
<dbReference type="Pfam" id="PF00327">
    <property type="entry name" value="Ribosomal_L30"/>
    <property type="match status" value="1"/>
</dbReference>
<dbReference type="PIRSF" id="PIRSF002211">
    <property type="entry name" value="Ribosomal_L30_bac-type"/>
    <property type="match status" value="1"/>
</dbReference>
<dbReference type="SUPFAM" id="SSF55129">
    <property type="entry name" value="Ribosomal protein L30p/L7e"/>
    <property type="match status" value="1"/>
</dbReference>
<dbReference type="PROSITE" id="PS00634">
    <property type="entry name" value="RIBOSOMAL_L30"/>
    <property type="match status" value="1"/>
</dbReference>
<name>RL30_EDWI9</name>
<protein>
    <recommendedName>
        <fullName evidence="1">Large ribosomal subunit protein uL30</fullName>
    </recommendedName>
    <alternativeName>
        <fullName evidence="2">50S ribosomal protein L30</fullName>
    </alternativeName>
</protein>
<proteinExistence type="inferred from homology"/>
<feature type="chain" id="PRO_1000215060" description="Large ribosomal subunit protein uL30">
    <location>
        <begin position="1"/>
        <end position="59"/>
    </location>
</feature>
<reference key="1">
    <citation type="submission" date="2009-03" db="EMBL/GenBank/DDBJ databases">
        <title>Complete genome sequence of Edwardsiella ictaluri 93-146.</title>
        <authorList>
            <person name="Williams M.L."/>
            <person name="Gillaspy A.F."/>
            <person name="Dyer D.W."/>
            <person name="Thune R.L."/>
            <person name="Waldbieser G.C."/>
            <person name="Schuster S.C."/>
            <person name="Gipson J."/>
            <person name="Zaitshik J."/>
            <person name="Landry C."/>
            <person name="Lawrence M.L."/>
        </authorList>
    </citation>
    <scope>NUCLEOTIDE SEQUENCE [LARGE SCALE GENOMIC DNA]</scope>
    <source>
        <strain>93-146</strain>
    </source>
</reference>
<evidence type="ECO:0000255" key="1">
    <source>
        <dbReference type="HAMAP-Rule" id="MF_01371"/>
    </source>
</evidence>
<evidence type="ECO:0000305" key="2"/>